<name>PUR9_YERE8</name>
<feature type="chain" id="PRO_1000018990" description="Bifunctional purine biosynthesis protein PurH">
    <location>
        <begin position="1"/>
        <end position="529"/>
    </location>
</feature>
<feature type="domain" description="MGS-like" evidence="2">
    <location>
        <begin position="1"/>
        <end position="148"/>
    </location>
</feature>
<accession>A1JIJ7</accession>
<reference key="1">
    <citation type="journal article" date="2006" name="PLoS Genet.">
        <title>The complete genome sequence and comparative genome analysis of the high pathogenicity Yersinia enterocolitica strain 8081.</title>
        <authorList>
            <person name="Thomson N.R."/>
            <person name="Howard S."/>
            <person name="Wren B.W."/>
            <person name="Holden M.T.G."/>
            <person name="Crossman L."/>
            <person name="Challis G.L."/>
            <person name="Churcher C."/>
            <person name="Mungall K."/>
            <person name="Brooks K."/>
            <person name="Chillingworth T."/>
            <person name="Feltwell T."/>
            <person name="Abdellah Z."/>
            <person name="Hauser H."/>
            <person name="Jagels K."/>
            <person name="Maddison M."/>
            <person name="Moule S."/>
            <person name="Sanders M."/>
            <person name="Whitehead S."/>
            <person name="Quail M.A."/>
            <person name="Dougan G."/>
            <person name="Parkhill J."/>
            <person name="Prentice M.B."/>
        </authorList>
    </citation>
    <scope>NUCLEOTIDE SEQUENCE [LARGE SCALE GENOMIC DNA]</scope>
    <source>
        <strain>NCTC 13174 / 8081</strain>
    </source>
</reference>
<dbReference type="EC" id="2.1.2.3" evidence="1"/>
<dbReference type="EC" id="3.5.4.10" evidence="1"/>
<dbReference type="EMBL" id="AM286415">
    <property type="protein sequence ID" value="CAL10435.1"/>
    <property type="molecule type" value="Genomic_DNA"/>
</dbReference>
<dbReference type="RefSeq" id="WP_005175670.1">
    <property type="nucleotide sequence ID" value="NC_008800.1"/>
</dbReference>
<dbReference type="RefSeq" id="YP_001004684.1">
    <property type="nucleotide sequence ID" value="NC_008800.1"/>
</dbReference>
<dbReference type="SMR" id="A1JIJ7"/>
<dbReference type="KEGG" id="yen:YE0303"/>
<dbReference type="PATRIC" id="fig|393305.7.peg.395"/>
<dbReference type="eggNOG" id="COG0138">
    <property type="taxonomic scope" value="Bacteria"/>
</dbReference>
<dbReference type="HOGENOM" id="CLU_016316_5_2_6"/>
<dbReference type="OrthoDB" id="9802065at2"/>
<dbReference type="UniPathway" id="UPA00074">
    <property type="reaction ID" value="UER00133"/>
</dbReference>
<dbReference type="UniPathway" id="UPA00074">
    <property type="reaction ID" value="UER00135"/>
</dbReference>
<dbReference type="Proteomes" id="UP000000642">
    <property type="component" value="Chromosome"/>
</dbReference>
<dbReference type="GO" id="GO:0005829">
    <property type="term" value="C:cytosol"/>
    <property type="evidence" value="ECO:0007669"/>
    <property type="project" value="TreeGrafter"/>
</dbReference>
<dbReference type="GO" id="GO:0003937">
    <property type="term" value="F:IMP cyclohydrolase activity"/>
    <property type="evidence" value="ECO:0007669"/>
    <property type="project" value="UniProtKB-UniRule"/>
</dbReference>
<dbReference type="GO" id="GO:0004643">
    <property type="term" value="F:phosphoribosylaminoimidazolecarboxamide formyltransferase activity"/>
    <property type="evidence" value="ECO:0007669"/>
    <property type="project" value="UniProtKB-UniRule"/>
</dbReference>
<dbReference type="GO" id="GO:0006189">
    <property type="term" value="P:'de novo' IMP biosynthetic process"/>
    <property type="evidence" value="ECO:0007669"/>
    <property type="project" value="UniProtKB-UniRule"/>
</dbReference>
<dbReference type="CDD" id="cd01421">
    <property type="entry name" value="IMPCH"/>
    <property type="match status" value="1"/>
</dbReference>
<dbReference type="FunFam" id="3.40.140.20:FF:000001">
    <property type="entry name" value="Bifunctional purine biosynthesis protein PurH"/>
    <property type="match status" value="1"/>
</dbReference>
<dbReference type="FunFam" id="3.40.140.20:FF:000002">
    <property type="entry name" value="Bifunctional purine biosynthesis protein PurH"/>
    <property type="match status" value="1"/>
</dbReference>
<dbReference type="FunFam" id="3.40.50.1380:FF:000001">
    <property type="entry name" value="Bifunctional purine biosynthesis protein PurH"/>
    <property type="match status" value="1"/>
</dbReference>
<dbReference type="Gene3D" id="3.40.140.20">
    <property type="match status" value="2"/>
</dbReference>
<dbReference type="Gene3D" id="3.40.50.1380">
    <property type="entry name" value="Methylglyoxal synthase-like domain"/>
    <property type="match status" value="1"/>
</dbReference>
<dbReference type="HAMAP" id="MF_00139">
    <property type="entry name" value="PurH"/>
    <property type="match status" value="1"/>
</dbReference>
<dbReference type="InterPro" id="IPR024051">
    <property type="entry name" value="AICAR_Tfase_dup_dom_sf"/>
</dbReference>
<dbReference type="InterPro" id="IPR016193">
    <property type="entry name" value="Cytidine_deaminase-like"/>
</dbReference>
<dbReference type="InterPro" id="IPR011607">
    <property type="entry name" value="MGS-like_dom"/>
</dbReference>
<dbReference type="InterPro" id="IPR036914">
    <property type="entry name" value="MGS-like_dom_sf"/>
</dbReference>
<dbReference type="InterPro" id="IPR002695">
    <property type="entry name" value="PurH-like"/>
</dbReference>
<dbReference type="NCBIfam" id="NF002049">
    <property type="entry name" value="PRK00881.1"/>
    <property type="match status" value="1"/>
</dbReference>
<dbReference type="NCBIfam" id="TIGR00355">
    <property type="entry name" value="purH"/>
    <property type="match status" value="1"/>
</dbReference>
<dbReference type="PANTHER" id="PTHR11692:SF0">
    <property type="entry name" value="BIFUNCTIONAL PURINE BIOSYNTHESIS PROTEIN ATIC"/>
    <property type="match status" value="1"/>
</dbReference>
<dbReference type="PANTHER" id="PTHR11692">
    <property type="entry name" value="BIFUNCTIONAL PURINE BIOSYNTHESIS PROTEIN PURH"/>
    <property type="match status" value="1"/>
</dbReference>
<dbReference type="Pfam" id="PF01808">
    <property type="entry name" value="AICARFT_IMPCHas"/>
    <property type="match status" value="1"/>
</dbReference>
<dbReference type="Pfam" id="PF02142">
    <property type="entry name" value="MGS"/>
    <property type="match status" value="1"/>
</dbReference>
<dbReference type="PIRSF" id="PIRSF000414">
    <property type="entry name" value="AICARFT_IMPCHas"/>
    <property type="match status" value="1"/>
</dbReference>
<dbReference type="SMART" id="SM00798">
    <property type="entry name" value="AICARFT_IMPCHas"/>
    <property type="match status" value="1"/>
</dbReference>
<dbReference type="SMART" id="SM00851">
    <property type="entry name" value="MGS"/>
    <property type="match status" value="1"/>
</dbReference>
<dbReference type="SUPFAM" id="SSF53927">
    <property type="entry name" value="Cytidine deaminase-like"/>
    <property type="match status" value="1"/>
</dbReference>
<dbReference type="SUPFAM" id="SSF52335">
    <property type="entry name" value="Methylglyoxal synthase-like"/>
    <property type="match status" value="1"/>
</dbReference>
<dbReference type="PROSITE" id="PS51855">
    <property type="entry name" value="MGS"/>
    <property type="match status" value="1"/>
</dbReference>
<organism>
    <name type="scientific">Yersinia enterocolitica serotype O:8 / biotype 1B (strain NCTC 13174 / 8081)</name>
    <dbReference type="NCBI Taxonomy" id="393305"/>
    <lineage>
        <taxon>Bacteria</taxon>
        <taxon>Pseudomonadati</taxon>
        <taxon>Pseudomonadota</taxon>
        <taxon>Gammaproteobacteria</taxon>
        <taxon>Enterobacterales</taxon>
        <taxon>Yersiniaceae</taxon>
        <taxon>Yersinia</taxon>
    </lineage>
</organism>
<proteinExistence type="inferred from homology"/>
<protein>
    <recommendedName>
        <fullName evidence="1">Bifunctional purine biosynthesis protein PurH</fullName>
    </recommendedName>
    <domain>
        <recommendedName>
            <fullName evidence="1">Phosphoribosylaminoimidazolecarboxamide formyltransferase</fullName>
            <ecNumber evidence="1">2.1.2.3</ecNumber>
        </recommendedName>
        <alternativeName>
            <fullName evidence="1">AICAR transformylase</fullName>
        </alternativeName>
    </domain>
    <domain>
        <recommendedName>
            <fullName evidence="1">IMP cyclohydrolase</fullName>
            <ecNumber evidence="1">3.5.4.10</ecNumber>
        </recommendedName>
        <alternativeName>
            <fullName evidence="1">ATIC</fullName>
        </alternativeName>
        <alternativeName>
            <fullName evidence="1">IMP synthase</fullName>
        </alternativeName>
        <alternativeName>
            <fullName evidence="1">Inosinicase</fullName>
        </alternativeName>
    </domain>
</protein>
<comment type="catalytic activity">
    <reaction evidence="1">
        <text>(6R)-10-formyltetrahydrofolate + 5-amino-1-(5-phospho-beta-D-ribosyl)imidazole-4-carboxamide = 5-formamido-1-(5-phospho-D-ribosyl)imidazole-4-carboxamide + (6S)-5,6,7,8-tetrahydrofolate</text>
        <dbReference type="Rhea" id="RHEA:22192"/>
        <dbReference type="ChEBI" id="CHEBI:57453"/>
        <dbReference type="ChEBI" id="CHEBI:58467"/>
        <dbReference type="ChEBI" id="CHEBI:58475"/>
        <dbReference type="ChEBI" id="CHEBI:195366"/>
        <dbReference type="EC" id="2.1.2.3"/>
    </reaction>
</comment>
<comment type="catalytic activity">
    <reaction evidence="1">
        <text>IMP + H2O = 5-formamido-1-(5-phospho-D-ribosyl)imidazole-4-carboxamide</text>
        <dbReference type="Rhea" id="RHEA:18445"/>
        <dbReference type="ChEBI" id="CHEBI:15377"/>
        <dbReference type="ChEBI" id="CHEBI:58053"/>
        <dbReference type="ChEBI" id="CHEBI:58467"/>
        <dbReference type="EC" id="3.5.4.10"/>
    </reaction>
</comment>
<comment type="pathway">
    <text evidence="1">Purine metabolism; IMP biosynthesis via de novo pathway; 5-formamido-1-(5-phospho-D-ribosyl)imidazole-4-carboxamide from 5-amino-1-(5-phospho-D-ribosyl)imidazole-4-carboxamide (10-formyl THF route): step 1/1.</text>
</comment>
<comment type="pathway">
    <text evidence="1">Purine metabolism; IMP biosynthesis via de novo pathway; IMP from 5-formamido-1-(5-phospho-D-ribosyl)imidazole-4-carboxamide: step 1/1.</text>
</comment>
<comment type="domain">
    <text evidence="1">The IMP cyclohydrolase activity resides in the N-terminal region.</text>
</comment>
<comment type="similarity">
    <text evidence="1">Belongs to the PurH family.</text>
</comment>
<sequence>MQQRRPIRRALLSVSDKAGIIEFATALSQRGIELLSTGGTARLLADAGLPVTEVSDYTGFPEMMDGRVKTLHPKVHGGILGRRGQDDGIMAQHDIQPIDIVVVNLYPFAQTVARPDCSLEDAVENIDIGGPTMVRSAAKNHKDVAIVVKSSDYPAIIAELDENDGSLTYPTRFNLAIKAFEHTAAYDSMIANYFGALVPAYHGDTEQPSGRFPRTLNLNYIKKQDMRYGENSHQQAAFYIEEDVKEASVATALQLQGKALSYNNIADTDAALECVKEFSEPACVIVKHANPCGVAIADSLLAAYDKAYKTDPTSAFGGIIAFNRELDAETASAIISRQFVEVIIAPSVSTEALALLAAKQNVRVLTCGQWQERSAGLDFKRVNGGLLVQDRDLGMVTEADLRVVSQRQPTEQELRDALFCWKVAKFVKSNAIVYARDNMTIGIGAGQMSRVYSAKIAGIKAADEGLEVAGSAMASDAFFPFRDGIDAAAAVGITCVIQPGGSIRDDEVIAAADEHGIAMIFTDMRHFRH</sequence>
<keyword id="KW-0378">Hydrolase</keyword>
<keyword id="KW-0511">Multifunctional enzyme</keyword>
<keyword id="KW-0658">Purine biosynthesis</keyword>
<keyword id="KW-0808">Transferase</keyword>
<evidence type="ECO:0000255" key="1">
    <source>
        <dbReference type="HAMAP-Rule" id="MF_00139"/>
    </source>
</evidence>
<evidence type="ECO:0000255" key="2">
    <source>
        <dbReference type="PROSITE-ProRule" id="PRU01202"/>
    </source>
</evidence>
<gene>
    <name evidence="1" type="primary">purH</name>
    <name type="ordered locus">YE0303</name>
</gene>